<name>RPO3_NATPD</name>
<accession>Q3IQT6</accession>
<comment type="function">
    <text evidence="1">DNA-dependent RNA polymerase (RNAP) catalyzes the transcription of DNA into RNA using the four ribonucleoside triphosphates as substrates.</text>
</comment>
<comment type="catalytic activity">
    <reaction evidence="1">
        <text>RNA(n) + a ribonucleoside 5'-triphosphate = RNA(n+1) + diphosphate</text>
        <dbReference type="Rhea" id="RHEA:21248"/>
        <dbReference type="Rhea" id="RHEA-COMP:14527"/>
        <dbReference type="Rhea" id="RHEA-COMP:17342"/>
        <dbReference type="ChEBI" id="CHEBI:33019"/>
        <dbReference type="ChEBI" id="CHEBI:61557"/>
        <dbReference type="ChEBI" id="CHEBI:140395"/>
        <dbReference type="EC" id="2.7.7.6"/>
    </reaction>
</comment>
<comment type="subunit">
    <text evidence="1">Part of the RNA polymerase complex.</text>
</comment>
<comment type="subcellular location">
    <subcellularLocation>
        <location evidence="1">Cytoplasm</location>
    </subcellularLocation>
</comment>
<comment type="similarity">
    <text evidence="1">Belongs to the archaeal Rpo3/eukaryotic RPB3 RNA polymerase subunit family.</text>
</comment>
<dbReference type="EC" id="2.7.7.6" evidence="1"/>
<dbReference type="EMBL" id="CR936257">
    <property type="protein sequence ID" value="CAI49508.1"/>
    <property type="molecule type" value="Genomic_DNA"/>
</dbReference>
<dbReference type="RefSeq" id="WP_011323133.1">
    <property type="nucleotide sequence ID" value="NC_007426.1"/>
</dbReference>
<dbReference type="SMR" id="Q3IQT6"/>
<dbReference type="STRING" id="348780.NP_2834A"/>
<dbReference type="EnsemblBacteria" id="CAI49508">
    <property type="protein sequence ID" value="CAI49508"/>
    <property type="gene ID" value="NP_2834A"/>
</dbReference>
<dbReference type="GeneID" id="3703154"/>
<dbReference type="KEGG" id="nph:NP_2834A"/>
<dbReference type="eggNOG" id="arCOG04241">
    <property type="taxonomic scope" value="Archaea"/>
</dbReference>
<dbReference type="HOGENOM" id="CLU_038421_3_1_2"/>
<dbReference type="OrthoDB" id="84933at2157"/>
<dbReference type="Proteomes" id="UP000002698">
    <property type="component" value="Chromosome"/>
</dbReference>
<dbReference type="GO" id="GO:0005737">
    <property type="term" value="C:cytoplasm"/>
    <property type="evidence" value="ECO:0007669"/>
    <property type="project" value="UniProtKB-SubCell"/>
</dbReference>
<dbReference type="GO" id="GO:0000428">
    <property type="term" value="C:DNA-directed RNA polymerase complex"/>
    <property type="evidence" value="ECO:0007669"/>
    <property type="project" value="UniProtKB-KW"/>
</dbReference>
<dbReference type="GO" id="GO:0003677">
    <property type="term" value="F:DNA binding"/>
    <property type="evidence" value="ECO:0007669"/>
    <property type="project" value="UniProtKB-UniRule"/>
</dbReference>
<dbReference type="GO" id="GO:0003899">
    <property type="term" value="F:DNA-directed RNA polymerase activity"/>
    <property type="evidence" value="ECO:0007669"/>
    <property type="project" value="UniProtKB-UniRule"/>
</dbReference>
<dbReference type="GO" id="GO:0046983">
    <property type="term" value="F:protein dimerization activity"/>
    <property type="evidence" value="ECO:0007669"/>
    <property type="project" value="InterPro"/>
</dbReference>
<dbReference type="GO" id="GO:0006351">
    <property type="term" value="P:DNA-templated transcription"/>
    <property type="evidence" value="ECO:0007669"/>
    <property type="project" value="UniProtKB-UniRule"/>
</dbReference>
<dbReference type="Gene3D" id="3.30.70.3110">
    <property type="match status" value="1"/>
</dbReference>
<dbReference type="Gene3D" id="2.170.120.12">
    <property type="entry name" value="DNA-directed RNA polymerase, insert domain"/>
    <property type="match status" value="1"/>
</dbReference>
<dbReference type="Gene3D" id="3.30.1360.10">
    <property type="entry name" value="RNA polymerase, RBP11-like subunit"/>
    <property type="match status" value="1"/>
</dbReference>
<dbReference type="HAMAP" id="MF_00320">
    <property type="entry name" value="RNApol_arch_Rpo3"/>
    <property type="match status" value="1"/>
</dbReference>
<dbReference type="InterPro" id="IPR011262">
    <property type="entry name" value="DNA-dir_RNA_pol_insert"/>
</dbReference>
<dbReference type="InterPro" id="IPR011263">
    <property type="entry name" value="DNA-dir_RNA_pol_RpoA/D/Rpb3"/>
</dbReference>
<dbReference type="InterPro" id="IPR036603">
    <property type="entry name" value="RBP11-like"/>
</dbReference>
<dbReference type="InterPro" id="IPR022842">
    <property type="entry name" value="RNAP_Rpo3/Rpb3/RPAC1"/>
</dbReference>
<dbReference type="InterPro" id="IPR036643">
    <property type="entry name" value="RNApol_insert_sf"/>
</dbReference>
<dbReference type="InterPro" id="IPR050518">
    <property type="entry name" value="Rpo3/RPB3_RNA_Pol_subunit"/>
</dbReference>
<dbReference type="NCBIfam" id="NF001988">
    <property type="entry name" value="PRK00783.1"/>
    <property type="match status" value="1"/>
</dbReference>
<dbReference type="PANTHER" id="PTHR11800">
    <property type="entry name" value="DNA-DIRECTED RNA POLYMERASE"/>
    <property type="match status" value="1"/>
</dbReference>
<dbReference type="PANTHER" id="PTHR11800:SF2">
    <property type="entry name" value="DNA-DIRECTED RNA POLYMERASE II SUBUNIT RPB3"/>
    <property type="match status" value="1"/>
</dbReference>
<dbReference type="Pfam" id="PF01000">
    <property type="entry name" value="RNA_pol_A_bac"/>
    <property type="match status" value="1"/>
</dbReference>
<dbReference type="Pfam" id="PF01193">
    <property type="entry name" value="RNA_pol_L"/>
    <property type="match status" value="1"/>
</dbReference>
<dbReference type="SMART" id="SM00662">
    <property type="entry name" value="RPOLD"/>
    <property type="match status" value="1"/>
</dbReference>
<dbReference type="SUPFAM" id="SSF56553">
    <property type="entry name" value="Insert subdomain of RNA polymerase alpha subunit"/>
    <property type="match status" value="1"/>
</dbReference>
<dbReference type="SUPFAM" id="SSF55257">
    <property type="entry name" value="RBP11-like subunits of RNA polymerase"/>
    <property type="match status" value="1"/>
</dbReference>
<organism>
    <name type="scientific">Natronomonas pharaonis (strain ATCC 35678 / DSM 2160 / CIP 103997 / JCM 8858 / NBRC 14720 / NCIMB 2260 / Gabara)</name>
    <name type="common">Halobacterium pharaonis</name>
    <dbReference type="NCBI Taxonomy" id="348780"/>
    <lineage>
        <taxon>Archaea</taxon>
        <taxon>Methanobacteriati</taxon>
        <taxon>Methanobacteriota</taxon>
        <taxon>Stenosarchaea group</taxon>
        <taxon>Halobacteria</taxon>
        <taxon>Halobacteriales</taxon>
        <taxon>Haloarculaceae</taxon>
        <taxon>Natronomonas</taxon>
    </lineage>
</organism>
<sequence>MSEEYEVTFIDRDERSARFLVRGVTPAFANGLRRAMIADVPTLSIDTLRVVENSSVMFDEQLALRLGLVPLTTPDDYEPGETVTLAIDVEGPATAYSGDLVSSDDKVQPADENIPIIELKDDQQLELEADATLGRGKDHAKHQGGVAVGYRHLQRVEVVGEKGEFEDDEPEILRGVIEEDGDLIETGEFDNDLSQRYPGKEVEVEEVPNAFVFDVETDGSMPVEELVLKAAESIAARADELEEAVAL</sequence>
<protein>
    <recommendedName>
        <fullName evidence="1">DNA-directed RNA polymerase subunit Rpo3</fullName>
        <ecNumber evidence="1">2.7.7.6</ecNumber>
    </recommendedName>
    <alternativeName>
        <fullName evidence="1">DNA-directed RNA polymerase subunit D</fullName>
    </alternativeName>
</protein>
<evidence type="ECO:0000255" key="1">
    <source>
        <dbReference type="HAMAP-Rule" id="MF_00320"/>
    </source>
</evidence>
<feature type="chain" id="PRO_1000005789" description="DNA-directed RNA polymerase subunit Rpo3">
    <location>
        <begin position="1"/>
        <end position="247"/>
    </location>
</feature>
<proteinExistence type="inferred from homology"/>
<reference key="1">
    <citation type="journal article" date="2005" name="Genome Res.">
        <title>Living with two extremes: conclusions from the genome sequence of Natronomonas pharaonis.</title>
        <authorList>
            <person name="Falb M."/>
            <person name="Pfeiffer F."/>
            <person name="Palm P."/>
            <person name="Rodewald K."/>
            <person name="Hickmann V."/>
            <person name="Tittor J."/>
            <person name="Oesterhelt D."/>
        </authorList>
    </citation>
    <scope>NUCLEOTIDE SEQUENCE [LARGE SCALE GENOMIC DNA]</scope>
    <source>
        <strain>ATCC 35678 / DSM 2160 / CIP 103997 / JCM 8858 / NBRC 14720 / NCIMB 2260 / Gabara</strain>
    </source>
</reference>
<gene>
    <name evidence="1" type="primary">rpo3</name>
    <name evidence="1" type="synonym">rpoD</name>
    <name type="ordered locus">NP_2834A</name>
</gene>
<keyword id="KW-0963">Cytoplasm</keyword>
<keyword id="KW-0240">DNA-directed RNA polymerase</keyword>
<keyword id="KW-0548">Nucleotidyltransferase</keyword>
<keyword id="KW-1185">Reference proteome</keyword>
<keyword id="KW-0804">Transcription</keyword>
<keyword id="KW-0808">Transferase</keyword>